<protein>
    <recommendedName>
        <fullName evidence="1">2,3,4,5-tetrahydropyridine-2,6-dicarboxylate N-acetyltransferase</fullName>
        <ecNumber evidence="1">2.3.1.89</ecNumber>
    </recommendedName>
    <alternativeName>
        <fullName evidence="1">Tetrahydrodipicolinate N-acetyltransferase</fullName>
        <shortName evidence="1">THP acetyltransferase</shortName>
        <shortName evidence="1">Tetrahydropicolinate acetylase</shortName>
    </alternativeName>
</protein>
<sequence length="234" mass="24324">MAQLDTQKIISTIANSKKTTPVKVYLKGKLSELHFPKSVHAFIGKHTGTVIGDWAEIKPILKKAKLDDYYVETAGRNTGVPLLDIKAANARIEPGAIIRDQVLIGDNAVIMMGAIINIGAEIGAGTMIDMGAVLGGRAIVGKHCHIGAGTVLAGVVEPRSAKPVTIGDHVMIGANAVVLEGTTVGEGAVIAAGAVVINDVPAHTVVAGVPAKVIKQVNDQTEAKTVLLDELRKL</sequence>
<proteinExistence type="inferred from homology"/>
<feature type="chain" id="PRO_0000376662" description="2,3,4,5-tetrahydropyridine-2,6-dicarboxylate N-acetyltransferase">
    <location>
        <begin position="1"/>
        <end position="234"/>
    </location>
</feature>
<gene>
    <name evidence="1" type="primary">dapH</name>
    <name type="ordered locus">LSEI_0097</name>
</gene>
<evidence type="ECO:0000255" key="1">
    <source>
        <dbReference type="HAMAP-Rule" id="MF_01691"/>
    </source>
</evidence>
<dbReference type="EC" id="2.3.1.89" evidence="1"/>
<dbReference type="EMBL" id="CP000423">
    <property type="protein sequence ID" value="ABJ68961.1"/>
    <property type="molecule type" value="Genomic_DNA"/>
</dbReference>
<dbReference type="RefSeq" id="WP_011673976.1">
    <property type="nucleotide sequence ID" value="NC_008526.1"/>
</dbReference>
<dbReference type="RefSeq" id="YP_805403.1">
    <property type="nucleotide sequence ID" value="NC_008526.1"/>
</dbReference>
<dbReference type="SMR" id="Q03CW1"/>
<dbReference type="STRING" id="321967.LSEI_0097"/>
<dbReference type="PaxDb" id="321967-LSEI_0097"/>
<dbReference type="KEGG" id="lca:LSEI_0097"/>
<dbReference type="PATRIC" id="fig|321967.11.peg.119"/>
<dbReference type="HOGENOM" id="CLU_103751_0_0_9"/>
<dbReference type="UniPathway" id="UPA00034">
    <property type="reaction ID" value="UER00022"/>
</dbReference>
<dbReference type="Proteomes" id="UP000001651">
    <property type="component" value="Chromosome"/>
</dbReference>
<dbReference type="GO" id="GO:0047200">
    <property type="term" value="F:tetrahydrodipicolinate N-acetyltransferase activity"/>
    <property type="evidence" value="ECO:0007669"/>
    <property type="project" value="UniProtKB-EC"/>
</dbReference>
<dbReference type="GO" id="GO:0019877">
    <property type="term" value="P:diaminopimelate biosynthetic process"/>
    <property type="evidence" value="ECO:0007669"/>
    <property type="project" value="UniProtKB-UniRule"/>
</dbReference>
<dbReference type="GO" id="GO:0009089">
    <property type="term" value="P:lysine biosynthetic process via diaminopimelate"/>
    <property type="evidence" value="ECO:0007669"/>
    <property type="project" value="UniProtKB-UniRule"/>
</dbReference>
<dbReference type="CDD" id="cd03350">
    <property type="entry name" value="LbH_THP_succinylT"/>
    <property type="match status" value="1"/>
</dbReference>
<dbReference type="Gene3D" id="2.160.10.10">
    <property type="entry name" value="Hexapeptide repeat proteins"/>
    <property type="match status" value="1"/>
</dbReference>
<dbReference type="Gene3D" id="3.30.70.250">
    <property type="entry name" value="Malonyl-CoA ACP transacylase, ACP-binding"/>
    <property type="match status" value="1"/>
</dbReference>
<dbReference type="HAMAP" id="MF_01691">
    <property type="entry name" value="DapH"/>
    <property type="match status" value="1"/>
</dbReference>
<dbReference type="InterPro" id="IPR019873">
    <property type="entry name" value="DapH"/>
</dbReference>
<dbReference type="InterPro" id="IPR013710">
    <property type="entry name" value="DapH_N"/>
</dbReference>
<dbReference type="InterPro" id="IPR001451">
    <property type="entry name" value="Hexapep"/>
</dbReference>
<dbReference type="InterPro" id="IPR050179">
    <property type="entry name" value="Trans_hexapeptide_repeat"/>
</dbReference>
<dbReference type="InterPro" id="IPR011004">
    <property type="entry name" value="Trimer_LpxA-like_sf"/>
</dbReference>
<dbReference type="NCBIfam" id="TIGR03532">
    <property type="entry name" value="DapD_Ac"/>
    <property type="match status" value="1"/>
</dbReference>
<dbReference type="PANTHER" id="PTHR43300:SF10">
    <property type="entry name" value="2,3,4,5-TETRAHYDROPYRIDINE-2,6-DICARBOXYLATE N-ACETYLTRANSFERASE"/>
    <property type="match status" value="1"/>
</dbReference>
<dbReference type="PANTHER" id="PTHR43300">
    <property type="entry name" value="ACETYLTRANSFERASE"/>
    <property type="match status" value="1"/>
</dbReference>
<dbReference type="Pfam" id="PF08503">
    <property type="entry name" value="DapH_N"/>
    <property type="match status" value="1"/>
</dbReference>
<dbReference type="Pfam" id="PF00132">
    <property type="entry name" value="Hexapep"/>
    <property type="match status" value="1"/>
</dbReference>
<dbReference type="Pfam" id="PF14602">
    <property type="entry name" value="Hexapep_2"/>
    <property type="match status" value="1"/>
</dbReference>
<dbReference type="SUPFAM" id="SSF51161">
    <property type="entry name" value="Trimeric LpxA-like enzymes"/>
    <property type="match status" value="1"/>
</dbReference>
<keyword id="KW-0012">Acyltransferase</keyword>
<keyword id="KW-0028">Amino-acid biosynthesis</keyword>
<keyword id="KW-0220">Diaminopimelate biosynthesis</keyword>
<keyword id="KW-0457">Lysine biosynthesis</keyword>
<keyword id="KW-1185">Reference proteome</keyword>
<keyword id="KW-0677">Repeat</keyword>
<keyword id="KW-0808">Transferase</keyword>
<reference key="1">
    <citation type="journal article" date="2006" name="Proc. Natl. Acad. Sci. U.S.A.">
        <title>Comparative genomics of the lactic acid bacteria.</title>
        <authorList>
            <person name="Makarova K.S."/>
            <person name="Slesarev A."/>
            <person name="Wolf Y.I."/>
            <person name="Sorokin A."/>
            <person name="Mirkin B."/>
            <person name="Koonin E.V."/>
            <person name="Pavlov A."/>
            <person name="Pavlova N."/>
            <person name="Karamychev V."/>
            <person name="Polouchine N."/>
            <person name="Shakhova V."/>
            <person name="Grigoriev I."/>
            <person name="Lou Y."/>
            <person name="Rohksar D."/>
            <person name="Lucas S."/>
            <person name="Huang K."/>
            <person name="Goodstein D.M."/>
            <person name="Hawkins T."/>
            <person name="Plengvidhya V."/>
            <person name="Welker D."/>
            <person name="Hughes J."/>
            <person name="Goh Y."/>
            <person name="Benson A."/>
            <person name="Baldwin K."/>
            <person name="Lee J.-H."/>
            <person name="Diaz-Muniz I."/>
            <person name="Dosti B."/>
            <person name="Smeianov V."/>
            <person name="Wechter W."/>
            <person name="Barabote R."/>
            <person name="Lorca G."/>
            <person name="Altermann E."/>
            <person name="Barrangou R."/>
            <person name="Ganesan B."/>
            <person name="Xie Y."/>
            <person name="Rawsthorne H."/>
            <person name="Tamir D."/>
            <person name="Parker C."/>
            <person name="Breidt F."/>
            <person name="Broadbent J.R."/>
            <person name="Hutkins R."/>
            <person name="O'Sullivan D."/>
            <person name="Steele J."/>
            <person name="Unlu G."/>
            <person name="Saier M.H. Jr."/>
            <person name="Klaenhammer T."/>
            <person name="Richardson P."/>
            <person name="Kozyavkin S."/>
            <person name="Weimer B.C."/>
            <person name="Mills D.A."/>
        </authorList>
    </citation>
    <scope>NUCLEOTIDE SEQUENCE [LARGE SCALE GENOMIC DNA]</scope>
    <source>
        <strain>ATCC 334 / BCRC 17002 / CCUG 31169 / CIP 107868 / KCTC 3260 / NRRL B-441</strain>
    </source>
</reference>
<name>DAPH_LACP3</name>
<organism>
    <name type="scientific">Lacticaseibacillus paracasei (strain ATCC 334 / BCRC 17002 / CCUG 31169 / CIP 107868 / KCTC 3260 / NRRL B-441)</name>
    <name type="common">Lactobacillus paracasei</name>
    <dbReference type="NCBI Taxonomy" id="321967"/>
    <lineage>
        <taxon>Bacteria</taxon>
        <taxon>Bacillati</taxon>
        <taxon>Bacillota</taxon>
        <taxon>Bacilli</taxon>
        <taxon>Lactobacillales</taxon>
        <taxon>Lactobacillaceae</taxon>
        <taxon>Lacticaseibacillus</taxon>
    </lineage>
</organism>
<accession>Q03CW1</accession>
<comment type="function">
    <text evidence="1">Catalyzes the transfer of an acetyl group from acetyl-CoA to tetrahydrodipicolinate.</text>
</comment>
<comment type="catalytic activity">
    <reaction evidence="1">
        <text>(S)-2,3,4,5-tetrahydrodipicolinate + acetyl-CoA + H2O = L-2-acetamido-6-oxoheptanedioate + CoA</text>
        <dbReference type="Rhea" id="RHEA:13085"/>
        <dbReference type="ChEBI" id="CHEBI:15377"/>
        <dbReference type="ChEBI" id="CHEBI:16845"/>
        <dbReference type="ChEBI" id="CHEBI:57287"/>
        <dbReference type="ChEBI" id="CHEBI:57288"/>
        <dbReference type="ChEBI" id="CHEBI:58117"/>
        <dbReference type="EC" id="2.3.1.89"/>
    </reaction>
</comment>
<comment type="pathway">
    <text evidence="1">Amino-acid biosynthesis; L-lysine biosynthesis via DAP pathway; LL-2,6-diaminopimelate from (S)-tetrahydrodipicolinate (acetylase route): step 1/3.</text>
</comment>
<comment type="similarity">
    <text evidence="1">Belongs to the transferase hexapeptide repeat family. DapH subfamily.</text>
</comment>